<feature type="chain" id="PRO_0000435869" description="Protein SPEAR4">
    <location>
        <begin position="1"/>
        <end position="300"/>
    </location>
</feature>
<feature type="region of interest" description="Disordered" evidence="2">
    <location>
        <begin position="1"/>
        <end position="45"/>
    </location>
</feature>
<feature type="short sequence motif" description="SPL" evidence="7">
    <location>
        <begin position="40"/>
        <end position="48"/>
    </location>
</feature>
<feature type="short sequence motif" description="EAR" evidence="7">
    <location>
        <begin position="294"/>
        <end position="300"/>
    </location>
</feature>
<feature type="compositionally biased region" description="Polar residues" evidence="2">
    <location>
        <begin position="1"/>
        <end position="10"/>
    </location>
</feature>
<feature type="compositionally biased region" description="Basic residues" evidence="2">
    <location>
        <begin position="25"/>
        <end position="39"/>
    </location>
</feature>
<sequence>MCSKTSSVSYGNREDDDNYSSLCPKKQKHNNGGKKRVPRRGPGVAELEKIRLGEQHISTAAPFTLHHPPSLEKSPTITDRTGLVYPFSSYFSAGSFPSDLIPPAPVFQRKHDSSLHYLPPMNLPKQGSGGFYQFIEPPSSQTSSLDNVTKFLDEEKISSAKRPWHFMADTAKCSVGPSTTISRDAKQTRSLDLRLKNHVQDSGTTIRNPITIDSPSSASPPTTIFANPSLGFPRFLQKEEDDHEIIQRKSGTNFPLNKKPFYSFLPANDQIIRDQDRSFSLRTERYDTVPDHGIDLRLKL</sequence>
<protein>
    <recommendedName>
        <fullName evidence="6">Protein SPEAR4</fullName>
    </recommendedName>
    <alternativeName>
        <fullName evidence="6">SPL-like, EAR-containing protein 4</fullName>
    </alternativeName>
    <alternativeName>
        <fullName evidence="5">TCP interactor containing EAR motif protein 3</fullName>
    </alternativeName>
</protein>
<accession>Q9SHQ9</accession>
<accession>A0ME99</accession>
<proteinExistence type="evidence at protein level"/>
<dbReference type="EMBL" id="AC007508">
    <property type="protein sequence ID" value="AAF24558.1"/>
    <property type="molecule type" value="Genomic_DNA"/>
</dbReference>
<dbReference type="EMBL" id="CP002684">
    <property type="protein sequence ID" value="AEE31028.1"/>
    <property type="molecule type" value="Genomic_DNA"/>
</dbReference>
<dbReference type="EMBL" id="DQ446305">
    <property type="protein sequence ID" value="ABE65669.1"/>
    <property type="molecule type" value="mRNA"/>
</dbReference>
<dbReference type="EMBL" id="DQ652868">
    <property type="protein sequence ID" value="ABK28421.1"/>
    <property type="status" value="ALT_SEQ"/>
    <property type="molecule type" value="mRNA"/>
</dbReference>
<dbReference type="RefSeq" id="NP_174196.2">
    <property type="nucleotide sequence ID" value="NM_102642.3"/>
</dbReference>
<dbReference type="STRING" id="3702.Q9SHQ9"/>
<dbReference type="iPTMnet" id="Q9SHQ9"/>
<dbReference type="PaxDb" id="3702-AT1G29010.1"/>
<dbReference type="DNASU" id="839775"/>
<dbReference type="EnsemblPlants" id="AT1G29010.1">
    <property type="protein sequence ID" value="AT1G29010.1"/>
    <property type="gene ID" value="AT1G29010"/>
</dbReference>
<dbReference type="GeneID" id="839775"/>
<dbReference type="Gramene" id="AT1G29010.1">
    <property type="protein sequence ID" value="AT1G29010.1"/>
    <property type="gene ID" value="AT1G29010"/>
</dbReference>
<dbReference type="KEGG" id="ath:AT1G29010"/>
<dbReference type="Araport" id="AT1G29010"/>
<dbReference type="TAIR" id="AT1G29010">
    <property type="gene designation" value="TIE3"/>
</dbReference>
<dbReference type="eggNOG" id="ENOG502R7WF">
    <property type="taxonomic scope" value="Eukaryota"/>
</dbReference>
<dbReference type="HOGENOM" id="CLU_919369_0_0_1"/>
<dbReference type="InParanoid" id="Q9SHQ9"/>
<dbReference type="OMA" id="HYLPPMN"/>
<dbReference type="PhylomeDB" id="Q9SHQ9"/>
<dbReference type="PRO" id="PR:Q9SHQ9"/>
<dbReference type="Proteomes" id="UP000006548">
    <property type="component" value="Chromosome 1"/>
</dbReference>
<dbReference type="ExpressionAtlas" id="Q9SHQ9">
    <property type="expression patterns" value="baseline and differential"/>
</dbReference>
<dbReference type="GO" id="GO:0003700">
    <property type="term" value="F:DNA-binding transcription factor activity"/>
    <property type="evidence" value="ECO:0007669"/>
    <property type="project" value="InterPro"/>
</dbReference>
<dbReference type="GO" id="GO:0048366">
    <property type="term" value="P:leaf development"/>
    <property type="evidence" value="ECO:0000315"/>
    <property type="project" value="TAIR"/>
</dbReference>
<dbReference type="GO" id="GO:0045892">
    <property type="term" value="P:negative regulation of DNA-templated transcription"/>
    <property type="evidence" value="ECO:0000250"/>
    <property type="project" value="TAIR"/>
</dbReference>
<dbReference type="InterPro" id="IPR040356">
    <property type="entry name" value="SPEAR"/>
</dbReference>
<dbReference type="PANTHER" id="PTHR33388">
    <property type="entry name" value="OS01G0212500 PROTEIN"/>
    <property type="match status" value="1"/>
</dbReference>
<dbReference type="PANTHER" id="PTHR33388:SF14">
    <property type="entry name" value="PROTEIN SPEAR4"/>
    <property type="match status" value="1"/>
</dbReference>
<reference key="1">
    <citation type="journal article" date="2000" name="Nature">
        <title>Sequence and analysis of chromosome 1 of the plant Arabidopsis thaliana.</title>
        <authorList>
            <person name="Theologis A."/>
            <person name="Ecker J.R."/>
            <person name="Palm C.J."/>
            <person name="Federspiel N.A."/>
            <person name="Kaul S."/>
            <person name="White O."/>
            <person name="Alonso J."/>
            <person name="Altafi H."/>
            <person name="Araujo R."/>
            <person name="Bowman C.L."/>
            <person name="Brooks S.Y."/>
            <person name="Buehler E."/>
            <person name="Chan A."/>
            <person name="Chao Q."/>
            <person name="Chen H."/>
            <person name="Cheuk R.F."/>
            <person name="Chin C.W."/>
            <person name="Chung M.K."/>
            <person name="Conn L."/>
            <person name="Conway A.B."/>
            <person name="Conway A.R."/>
            <person name="Creasy T.H."/>
            <person name="Dewar K."/>
            <person name="Dunn P."/>
            <person name="Etgu P."/>
            <person name="Feldblyum T.V."/>
            <person name="Feng J.-D."/>
            <person name="Fong B."/>
            <person name="Fujii C.Y."/>
            <person name="Gill J.E."/>
            <person name="Goldsmith A.D."/>
            <person name="Haas B."/>
            <person name="Hansen N.F."/>
            <person name="Hughes B."/>
            <person name="Huizar L."/>
            <person name="Hunter J.L."/>
            <person name="Jenkins J."/>
            <person name="Johnson-Hopson C."/>
            <person name="Khan S."/>
            <person name="Khaykin E."/>
            <person name="Kim C.J."/>
            <person name="Koo H.L."/>
            <person name="Kremenetskaia I."/>
            <person name="Kurtz D.B."/>
            <person name="Kwan A."/>
            <person name="Lam B."/>
            <person name="Langin-Hooper S."/>
            <person name="Lee A."/>
            <person name="Lee J.M."/>
            <person name="Lenz C.A."/>
            <person name="Li J.H."/>
            <person name="Li Y.-P."/>
            <person name="Lin X."/>
            <person name="Liu S.X."/>
            <person name="Liu Z.A."/>
            <person name="Luros J.S."/>
            <person name="Maiti R."/>
            <person name="Marziali A."/>
            <person name="Militscher J."/>
            <person name="Miranda M."/>
            <person name="Nguyen M."/>
            <person name="Nierman W.C."/>
            <person name="Osborne B.I."/>
            <person name="Pai G."/>
            <person name="Peterson J."/>
            <person name="Pham P.K."/>
            <person name="Rizzo M."/>
            <person name="Rooney T."/>
            <person name="Rowley D."/>
            <person name="Sakano H."/>
            <person name="Salzberg S.L."/>
            <person name="Schwartz J.R."/>
            <person name="Shinn P."/>
            <person name="Southwick A.M."/>
            <person name="Sun H."/>
            <person name="Tallon L.J."/>
            <person name="Tambunga G."/>
            <person name="Toriumi M.J."/>
            <person name="Town C.D."/>
            <person name="Utterback T."/>
            <person name="Van Aken S."/>
            <person name="Vaysberg M."/>
            <person name="Vysotskaia V.S."/>
            <person name="Walker M."/>
            <person name="Wu D."/>
            <person name="Yu G."/>
            <person name="Fraser C.M."/>
            <person name="Venter J.C."/>
            <person name="Davis R.W."/>
        </authorList>
    </citation>
    <scope>NUCLEOTIDE SEQUENCE [LARGE SCALE GENOMIC DNA]</scope>
    <source>
        <strain>cv. Columbia</strain>
    </source>
</reference>
<reference key="2">
    <citation type="journal article" date="2017" name="Plant J.">
        <title>Araport11: a complete reannotation of the Arabidopsis thaliana reference genome.</title>
        <authorList>
            <person name="Cheng C.Y."/>
            <person name="Krishnakumar V."/>
            <person name="Chan A.P."/>
            <person name="Thibaud-Nissen F."/>
            <person name="Schobel S."/>
            <person name="Town C.D."/>
        </authorList>
    </citation>
    <scope>GENOME REANNOTATION</scope>
    <source>
        <strain>cv. Columbia</strain>
    </source>
</reference>
<reference key="3">
    <citation type="journal article" date="2006" name="Plant Biotechnol. J.">
        <title>Simultaneous high-throughput recombinational cloning of open reading frames in closed and open configurations.</title>
        <authorList>
            <person name="Underwood B.A."/>
            <person name="Vanderhaeghen R."/>
            <person name="Whitford R."/>
            <person name="Town C.D."/>
            <person name="Hilson P."/>
        </authorList>
    </citation>
    <scope>NUCLEOTIDE SEQUENCE [LARGE SCALE MRNA]</scope>
    <source>
        <strain>cv. Columbia</strain>
    </source>
</reference>
<reference key="4">
    <citation type="journal article" date="2013" name="Plant Cell">
        <title>The TIE1 transcriptional repressor links TCP transcription factors with TOPLESS/TOPLESS-RELATED corepressors and modulates leaf development in Arabidopsis.</title>
        <authorList>
            <person name="Tao Q."/>
            <person name="Guo D."/>
            <person name="Wei B."/>
            <person name="Zhang F."/>
            <person name="Pang C."/>
            <person name="Jiang H."/>
            <person name="Zhang J."/>
            <person name="Wei T."/>
            <person name="Gu H."/>
            <person name="Qu L.J."/>
            <person name="Qin G."/>
        </authorList>
    </citation>
    <scope>GENE FAMILY</scope>
    <scope>NOMENCLATURE</scope>
    <scope>TISSUE SPECIFICITY</scope>
</reference>
<reference key="5">
    <citation type="journal article" date="2014" name="J. Genet. Genomics">
        <title>SPOROCYTELESS is a novel embryophyte-specific transcription repressor that interacts with TPL and TCP proteins in Arabidopsis.</title>
        <authorList>
            <person name="Chen G.H."/>
            <person name="Sun J.Y."/>
            <person name="Liu M."/>
            <person name="Liu J."/>
            <person name="Yang W.C."/>
        </authorList>
    </citation>
    <scope>GENE FAMILY</scope>
    <scope>NOMENCLATURE</scope>
    <scope>INTERACTION WITH SPL AND SPEAR2</scope>
</reference>
<name>SPER4_ARATH</name>
<keyword id="KW-1185">Reference proteome</keyword>
<keyword id="KW-0678">Repressor</keyword>
<keyword id="KW-0804">Transcription</keyword>
<keyword id="KW-0805">Transcription regulation</keyword>
<comment type="function">
    <text evidence="1 8">Adapter-like transcriptional repressor recruiting TPL/TPR coepressors to inhibit TCP transcription factors (By similarity). May be involved in leaf development.</text>
</comment>
<comment type="subunit">
    <text evidence="4">Interacts with SPL and SPEAR2.</text>
</comment>
<comment type="tissue specificity">
    <text evidence="3">Expressed in leaves.</text>
</comment>
<comment type="miscellaneous">
    <text evidence="3">Knock down expression of SPEAR2/TIE4 and SPEAR4/TIE3 by RNAi in a SPEAR3/TIE1 null mutant produces lines displaying epinastic leaves.</text>
</comment>
<comment type="sequence caution" evidence="7">
    <conflict type="erroneous termination">
        <sequence resource="EMBL-CDS" id="ABK28421"/>
    </conflict>
    <text>Extended C-terminus.</text>
</comment>
<evidence type="ECO:0000250" key="1">
    <source>
        <dbReference type="UniProtKB" id="Q6IDB0"/>
    </source>
</evidence>
<evidence type="ECO:0000256" key="2">
    <source>
        <dbReference type="SAM" id="MobiDB-lite"/>
    </source>
</evidence>
<evidence type="ECO:0000269" key="3">
    <source>
    </source>
</evidence>
<evidence type="ECO:0000269" key="4">
    <source>
    </source>
</evidence>
<evidence type="ECO:0000303" key="5">
    <source>
    </source>
</evidence>
<evidence type="ECO:0000303" key="6">
    <source>
    </source>
</evidence>
<evidence type="ECO:0000305" key="7"/>
<evidence type="ECO:0000305" key="8">
    <source>
    </source>
</evidence>
<evidence type="ECO:0000312" key="9">
    <source>
        <dbReference type="Araport" id="AT1G29010"/>
    </source>
</evidence>
<evidence type="ECO:0000312" key="10">
    <source>
        <dbReference type="EMBL" id="AAF24558.1"/>
    </source>
</evidence>
<gene>
    <name evidence="6" type="primary">SPEAR4</name>
    <name evidence="5" type="synonym">TIE3</name>
    <name evidence="9" type="ordered locus">At1g29010</name>
    <name evidence="10" type="ORF">F1K23.3</name>
</gene>
<organism>
    <name type="scientific">Arabidopsis thaliana</name>
    <name type="common">Mouse-ear cress</name>
    <dbReference type="NCBI Taxonomy" id="3702"/>
    <lineage>
        <taxon>Eukaryota</taxon>
        <taxon>Viridiplantae</taxon>
        <taxon>Streptophyta</taxon>
        <taxon>Embryophyta</taxon>
        <taxon>Tracheophyta</taxon>
        <taxon>Spermatophyta</taxon>
        <taxon>Magnoliopsida</taxon>
        <taxon>eudicotyledons</taxon>
        <taxon>Gunneridae</taxon>
        <taxon>Pentapetalae</taxon>
        <taxon>rosids</taxon>
        <taxon>malvids</taxon>
        <taxon>Brassicales</taxon>
        <taxon>Brassicaceae</taxon>
        <taxon>Camelineae</taxon>
        <taxon>Arabidopsis</taxon>
    </lineage>
</organism>